<feature type="chain" id="PRO_0000416466" description="Ribosome modulation factor">
    <location>
        <begin position="1"/>
        <end position="59"/>
    </location>
</feature>
<accession>F4DAE8</accession>
<keyword id="KW-0963">Cytoplasm</keyword>
<keyword id="KW-0810">Translation regulation</keyword>
<evidence type="ECO:0000255" key="1">
    <source>
        <dbReference type="HAMAP-Rule" id="MF_00919"/>
    </source>
</evidence>
<gene>
    <name evidence="1" type="primary">rmf</name>
    <name type="ordered locus">B565_1965</name>
</gene>
<organism>
    <name type="scientific">Aeromonas veronii (strain B565)</name>
    <dbReference type="NCBI Taxonomy" id="998088"/>
    <lineage>
        <taxon>Bacteria</taxon>
        <taxon>Pseudomonadati</taxon>
        <taxon>Pseudomonadota</taxon>
        <taxon>Gammaproteobacteria</taxon>
        <taxon>Aeromonadales</taxon>
        <taxon>Aeromonadaceae</taxon>
        <taxon>Aeromonas</taxon>
    </lineage>
</organism>
<sequence>MMKRQKRDRLERARARGYQAGVVGKQKEACPYQCLDARGHWLGGWRDAMEGRGSGLFMK</sequence>
<dbReference type="EMBL" id="CP002607">
    <property type="protein sequence ID" value="AEB50000.1"/>
    <property type="molecule type" value="Genomic_DNA"/>
</dbReference>
<dbReference type="SMR" id="F4DAE8"/>
<dbReference type="KEGG" id="avr:B565_1965"/>
<dbReference type="HOGENOM" id="CLU_203350_0_0_6"/>
<dbReference type="GO" id="GO:0005737">
    <property type="term" value="C:cytoplasm"/>
    <property type="evidence" value="ECO:0007669"/>
    <property type="project" value="UniProtKB-SubCell"/>
</dbReference>
<dbReference type="GO" id="GO:0006417">
    <property type="term" value="P:regulation of translation"/>
    <property type="evidence" value="ECO:0007669"/>
    <property type="project" value="UniProtKB-UniRule"/>
</dbReference>
<dbReference type="Gene3D" id="1.10.10.620">
    <property type="entry name" value="ribosome modulation factor like domain"/>
    <property type="match status" value="1"/>
</dbReference>
<dbReference type="HAMAP" id="MF_00919">
    <property type="entry name" value="RMF"/>
    <property type="match status" value="1"/>
</dbReference>
<dbReference type="InterPro" id="IPR007040">
    <property type="entry name" value="Ribosome_modulation_factor"/>
</dbReference>
<dbReference type="InterPro" id="IPR023200">
    <property type="entry name" value="RMF_sf"/>
</dbReference>
<dbReference type="NCBIfam" id="NF011162">
    <property type="entry name" value="PRK14563.1"/>
    <property type="match status" value="1"/>
</dbReference>
<dbReference type="NCBIfam" id="NF041886">
    <property type="entry name" value="Rmf_CrpP_fam"/>
    <property type="match status" value="1"/>
</dbReference>
<dbReference type="Pfam" id="PF04957">
    <property type="entry name" value="RMF"/>
    <property type="match status" value="1"/>
</dbReference>
<protein>
    <recommendedName>
        <fullName evidence="1">Ribosome modulation factor</fullName>
        <shortName evidence="1">RMF</shortName>
    </recommendedName>
</protein>
<name>RMF_AERVB</name>
<reference key="1">
    <citation type="journal article" date="2011" name="J. Bacteriol.">
        <title>Complete genome sequence of Aeromonas veronii strain B565.</title>
        <authorList>
            <person name="Li Y."/>
            <person name="Liu Y."/>
            <person name="Zhou Z."/>
            <person name="Huang H."/>
            <person name="Ren Y."/>
            <person name="Zhang Y."/>
            <person name="Li G."/>
            <person name="Zhou Z."/>
            <person name="Wang L."/>
        </authorList>
    </citation>
    <scope>NUCLEOTIDE SEQUENCE [LARGE SCALE GENOMIC DNA]</scope>
    <source>
        <strain>B565</strain>
    </source>
</reference>
<proteinExistence type="inferred from homology"/>
<comment type="function">
    <text evidence="1">During stationary phase, converts 70S ribosomes to an inactive dimeric form (100S ribosomes).</text>
</comment>
<comment type="subcellular location">
    <subcellularLocation>
        <location evidence="1">Cytoplasm</location>
    </subcellularLocation>
</comment>
<comment type="similarity">
    <text evidence="1">Belongs to the ribosome modulation factor family.</text>
</comment>